<sequence>MESSKTFMRQMPITPGYSGFVPYLSCQGTSSEDNMANCLKIFQENTRRCKDQLEEFHCSVATAPKLKPVRSEGTVLRTLHQYYRQYHPLSLECKNIKKPLHEPPIPGWAGYLPRARVTELGCSTRYTVMARNCYRDFLDLMERAKQAHLKPYEKIYGVKSTPPPPTPPPKVLLHEGLLPKYPDFSIPGARCPTLSRALMEDPRPLMTCGCPQRPSVWCSGKIYLEPLSGGKDMEG</sequence>
<gene>
    <name type="primary">SPMIP5</name>
</gene>
<reference key="1">
    <citation type="journal article" date="2009" name="Science">
        <title>The genome sequence of taurine cattle: a window to ruminant biology and evolution.</title>
        <authorList>
            <consortium name="The bovine genome sequencing and analysis consortium"/>
        </authorList>
    </citation>
    <scope>NUCLEOTIDE SEQUENCE [LARGE SCALE GENOMIC DNA]</scope>
    <source>
        <strain>Hereford</strain>
    </source>
</reference>
<reference key="2">
    <citation type="submission" date="2007-07" db="EMBL/GenBank/DDBJ databases">
        <authorList>
            <consortium name="NIH - Mammalian Gene Collection (MGC) project"/>
        </authorList>
    </citation>
    <scope>NUCLEOTIDE SEQUENCE [LARGE SCALE MRNA]</scope>
    <source>
        <strain>Crossbred X Angus</strain>
        <tissue>Liver</tissue>
    </source>
</reference>
<reference evidence="4" key="3">
    <citation type="journal article" date="2023" name="Cell">
        <title>Structural specializations of the sperm tail.</title>
        <authorList>
            <person name="Leung M.R."/>
            <person name="Zeng J."/>
            <person name="Wang X."/>
            <person name="Roelofs M.C."/>
            <person name="Huang W."/>
            <person name="Zenezini Chiozzi R."/>
            <person name="Hevler J.F."/>
            <person name="Heck A.J.R."/>
            <person name="Dutcher S.K."/>
            <person name="Brown A."/>
            <person name="Zhang R."/>
            <person name="Zeev-Ben-Mordehai T."/>
        </authorList>
    </citation>
    <scope>STRUCTURE BY ELECTRON MICROSCOPY (3.60 ANGSTROMS)</scope>
    <scope>FUNCTION</scope>
    <scope>SUBUNIT</scope>
    <scope>SUBCELLULAR LOCATION</scope>
    <scope>TISSUE SPECIFICITY</scope>
</reference>
<organism>
    <name type="scientific">Bos taurus</name>
    <name type="common">Bovine</name>
    <dbReference type="NCBI Taxonomy" id="9913"/>
    <lineage>
        <taxon>Eukaryota</taxon>
        <taxon>Metazoa</taxon>
        <taxon>Chordata</taxon>
        <taxon>Craniata</taxon>
        <taxon>Vertebrata</taxon>
        <taxon>Euteleostomi</taxon>
        <taxon>Mammalia</taxon>
        <taxon>Eutheria</taxon>
        <taxon>Laurasiatheria</taxon>
        <taxon>Artiodactyla</taxon>
        <taxon>Ruminantia</taxon>
        <taxon>Pecora</taxon>
        <taxon>Bovidae</taxon>
        <taxon>Bovinae</taxon>
        <taxon>Bos</taxon>
    </lineage>
</organism>
<keyword id="KW-0002">3D-structure</keyword>
<keyword id="KW-0966">Cell projection</keyword>
<keyword id="KW-0969">Cilium</keyword>
<keyword id="KW-0963">Cytoplasm</keyword>
<keyword id="KW-0206">Cytoskeleton</keyword>
<keyword id="KW-0282">Flagellum</keyword>
<keyword id="KW-0539">Nucleus</keyword>
<keyword id="KW-1185">Reference proteome</keyword>
<proteinExistence type="evidence at protein level"/>
<feature type="chain" id="PRO_0000358915" description="Sperm-associated microtubule inner protein 5">
    <location>
        <begin position="1"/>
        <end position="235"/>
    </location>
</feature>
<evidence type="ECO:0000250" key="1">
    <source>
        <dbReference type="UniProtKB" id="Q9CQT6"/>
    </source>
</evidence>
<evidence type="ECO:0000269" key="2">
    <source>
    </source>
</evidence>
<evidence type="ECO:0000305" key="3"/>
<evidence type="ECO:0007744" key="4">
    <source>
        <dbReference type="PDB" id="8OTZ"/>
    </source>
</evidence>
<name>SMIP5_BOVIN</name>
<accession>A6QPC0</accession>
<protein>
    <recommendedName>
        <fullName>Sperm-associated microtubule inner protein 5</fullName>
    </recommendedName>
</protein>
<dbReference type="EMBL" id="AAFC03116910">
    <property type="status" value="NOT_ANNOTATED_CDS"/>
    <property type="molecule type" value="Genomic_DNA"/>
</dbReference>
<dbReference type="EMBL" id="BC149249">
    <property type="protein sequence ID" value="AAI49250.1"/>
    <property type="molecule type" value="mRNA"/>
</dbReference>
<dbReference type="RefSeq" id="NP_001094723.1">
    <property type="nucleotide sequence ID" value="NM_001101253.2"/>
</dbReference>
<dbReference type="PDB" id="8OTZ">
    <property type="method" value="EM"/>
    <property type="resolution" value="3.60 A"/>
    <property type="chains" value="J/K/L/M=1-235"/>
</dbReference>
<dbReference type="PDBsum" id="8OTZ"/>
<dbReference type="EMDB" id="EMD-17187"/>
<dbReference type="EMDB" id="EMD-50664"/>
<dbReference type="SMR" id="A6QPC0"/>
<dbReference type="FunCoup" id="A6QPC0">
    <property type="interactions" value="73"/>
</dbReference>
<dbReference type="PaxDb" id="9913-ENSBTAP00000018285"/>
<dbReference type="Ensembl" id="ENSBTAT00000018285.5">
    <property type="protein sequence ID" value="ENSBTAP00000018285.4"/>
    <property type="gene ID" value="ENSBTAG00000013763.6"/>
</dbReference>
<dbReference type="GeneID" id="616318"/>
<dbReference type="KEGG" id="bta:616318"/>
<dbReference type="CTD" id="616318"/>
<dbReference type="VEuPathDB" id="HostDB:ENSBTAG00000013763"/>
<dbReference type="VGNC" id="VGNC:52691">
    <property type="gene designation" value="SPMIP5"/>
</dbReference>
<dbReference type="eggNOG" id="ENOG502SAX8">
    <property type="taxonomic scope" value="Eukaryota"/>
</dbReference>
<dbReference type="GeneTree" id="ENSGT00390000017460"/>
<dbReference type="HOGENOM" id="CLU_1207231_0_0_1"/>
<dbReference type="InParanoid" id="A6QPC0"/>
<dbReference type="OMA" id="PGWAGFL"/>
<dbReference type="OrthoDB" id="2019884at2759"/>
<dbReference type="TreeFam" id="TF337656"/>
<dbReference type="Proteomes" id="UP000009136">
    <property type="component" value="Chromosome 26"/>
</dbReference>
<dbReference type="Bgee" id="ENSBTAG00000013763">
    <property type="expression patterns" value="Expressed in semen and 49 other cell types or tissues"/>
</dbReference>
<dbReference type="GO" id="GO:0005737">
    <property type="term" value="C:cytoplasm"/>
    <property type="evidence" value="ECO:0007669"/>
    <property type="project" value="UniProtKB-SubCell"/>
</dbReference>
<dbReference type="GO" id="GO:0005856">
    <property type="term" value="C:cytoskeleton"/>
    <property type="evidence" value="ECO:0007669"/>
    <property type="project" value="UniProtKB-KW"/>
</dbReference>
<dbReference type="GO" id="GO:0031514">
    <property type="term" value="C:motile cilium"/>
    <property type="evidence" value="ECO:0007669"/>
    <property type="project" value="UniProtKB-KW"/>
</dbReference>
<dbReference type="GO" id="GO:0005634">
    <property type="term" value="C:nucleus"/>
    <property type="evidence" value="ECO:0007669"/>
    <property type="project" value="UniProtKB-SubCell"/>
</dbReference>
<dbReference type="InterPro" id="IPR043246">
    <property type="entry name" value="SPMIP5"/>
</dbReference>
<dbReference type="InterPro" id="IPR055215">
    <property type="entry name" value="SPMIP5_dom"/>
</dbReference>
<dbReference type="PANTHER" id="PTHR47301:SF1">
    <property type="entry name" value="CHROMOSOME 10 OPEN READING FRAME 82"/>
    <property type="match status" value="1"/>
</dbReference>
<dbReference type="PANTHER" id="PTHR47301">
    <property type="entry name" value="HYPOTHETICAL PROTEIN LOC681006"/>
    <property type="match status" value="1"/>
</dbReference>
<dbReference type="Pfam" id="PF22573">
    <property type="entry name" value="SPMIP5"/>
    <property type="match status" value="1"/>
</dbReference>
<comment type="function">
    <text evidence="2">Microtubule inner protein (MIP) part of the dynein-decorated doublet microtubules (DMTs) in flagellum axoneme. May serve to reinforce and thus stabilize the microtubule structure in the sperm flagella.</text>
</comment>
<comment type="subunit">
    <text evidence="2">Microtubule inner protein component of sperm flagellar doublet microtubules.</text>
</comment>
<comment type="subcellular location">
    <subcellularLocation>
        <location evidence="2">Cytoplasm</location>
        <location evidence="2">Cytoskeleton</location>
        <location evidence="2">Flagellum axoneme</location>
    </subcellularLocation>
    <subcellularLocation>
        <location evidence="1">Cytoplasm</location>
    </subcellularLocation>
    <subcellularLocation>
        <location evidence="1">Nucleus</location>
    </subcellularLocation>
    <text evidence="1 2">Localizes to the A-tubules of DMTs (PubMed:37327785). Located in the cytoplasm of spermatocytes and the nuclei of round spermatids and elongated spermatids (By similarity).</text>
</comment>
<comment type="tissue specificity">
    <text evidence="3">Expressed in sperm.</text>
</comment>